<proteinExistence type="inferred from homology"/>
<organism>
    <name type="scientific">Candida dubliniensis (strain CD36 / ATCC MYA-646 / CBS 7987 / NCPF 3949 / NRRL Y-17841)</name>
    <name type="common">Yeast</name>
    <dbReference type="NCBI Taxonomy" id="573826"/>
    <lineage>
        <taxon>Eukaryota</taxon>
        <taxon>Fungi</taxon>
        <taxon>Dikarya</taxon>
        <taxon>Ascomycota</taxon>
        <taxon>Saccharomycotina</taxon>
        <taxon>Pichiomycetes</taxon>
        <taxon>Debaryomycetaceae</taxon>
        <taxon>Candida/Lodderomyces clade</taxon>
        <taxon>Candida</taxon>
    </lineage>
</organism>
<name>OCA5_CANDC</name>
<reference key="1">
    <citation type="journal article" date="2009" name="Genome Res.">
        <title>Comparative genomics of the fungal pathogens Candida dubliniensis and Candida albicans.</title>
        <authorList>
            <person name="Jackson A.P."/>
            <person name="Gamble J.A."/>
            <person name="Yeomans T."/>
            <person name="Moran G.P."/>
            <person name="Saunders D."/>
            <person name="Harris D."/>
            <person name="Aslett M."/>
            <person name="Barrell J.F."/>
            <person name="Butler G."/>
            <person name="Citiulo F."/>
            <person name="Coleman D.C."/>
            <person name="de Groot P.W.J."/>
            <person name="Goodwin T.J."/>
            <person name="Quail M.A."/>
            <person name="McQuillan J."/>
            <person name="Munro C.A."/>
            <person name="Pain A."/>
            <person name="Poulter R.T."/>
            <person name="Rajandream M.A."/>
            <person name="Renauld H."/>
            <person name="Spiering M.J."/>
            <person name="Tivey A."/>
            <person name="Gow N.A.R."/>
            <person name="Barrell B."/>
            <person name="Sullivan D.J."/>
            <person name="Berriman M."/>
        </authorList>
    </citation>
    <scope>NUCLEOTIDE SEQUENCE [LARGE SCALE GENOMIC DNA]</scope>
    <source>
        <strain>CD36 / ATCC MYA-646 / CBS 7987 / NCPF 3949 / NRRL Y-17841</strain>
    </source>
</reference>
<feature type="chain" id="PRO_0000408208" description="Oxidant-induced cell-cycle arrest protein 5">
    <location>
        <begin position="1"/>
        <end position="719"/>
    </location>
</feature>
<feature type="domain" description="Rab-GAP TBC" evidence="2">
    <location>
        <begin position="100"/>
        <end position="459"/>
    </location>
</feature>
<feature type="region of interest" description="Disordered" evidence="3">
    <location>
        <begin position="1"/>
        <end position="66"/>
    </location>
</feature>
<feature type="region of interest" description="Disordered" evidence="3">
    <location>
        <begin position="132"/>
        <end position="205"/>
    </location>
</feature>
<feature type="region of interest" description="Disordered" evidence="3">
    <location>
        <begin position="351"/>
        <end position="386"/>
    </location>
</feature>
<feature type="region of interest" description="Disordered" evidence="3">
    <location>
        <begin position="558"/>
        <end position="588"/>
    </location>
</feature>
<feature type="region of interest" description="Disordered" evidence="3">
    <location>
        <begin position="637"/>
        <end position="674"/>
    </location>
</feature>
<feature type="compositionally biased region" description="Low complexity" evidence="3">
    <location>
        <begin position="1"/>
        <end position="22"/>
    </location>
</feature>
<feature type="compositionally biased region" description="Low complexity" evidence="3">
    <location>
        <begin position="135"/>
        <end position="159"/>
    </location>
</feature>
<feature type="compositionally biased region" description="Low complexity" evidence="3">
    <location>
        <begin position="169"/>
        <end position="182"/>
    </location>
</feature>
<feature type="compositionally biased region" description="Basic and acidic residues" evidence="3">
    <location>
        <begin position="183"/>
        <end position="198"/>
    </location>
</feature>
<feature type="compositionally biased region" description="Polar residues" evidence="3">
    <location>
        <begin position="374"/>
        <end position="386"/>
    </location>
</feature>
<feature type="compositionally biased region" description="Basic residues" evidence="3">
    <location>
        <begin position="638"/>
        <end position="647"/>
    </location>
</feature>
<feature type="compositionally biased region" description="Low complexity" evidence="3">
    <location>
        <begin position="648"/>
        <end position="660"/>
    </location>
</feature>
<keyword id="KW-0963">Cytoplasm</keyword>
<gene>
    <name type="primary">OCA5</name>
    <name type="ORF">CD36_87200</name>
</gene>
<protein>
    <recommendedName>
        <fullName>Oxidant-induced cell-cycle arrest protein 5</fullName>
    </recommendedName>
</protein>
<accession>B9WEV3</accession>
<comment type="subcellular location">
    <subcellularLocation>
        <location evidence="1">Cytoplasm</location>
    </subcellularLocation>
</comment>
<comment type="similarity">
    <text evidence="4">Belongs to the OCA5 family.</text>
</comment>
<dbReference type="EMBL" id="FM992690">
    <property type="protein sequence ID" value="CAX43216.1"/>
    <property type="molecule type" value="Genomic_DNA"/>
</dbReference>
<dbReference type="RefSeq" id="XP_002419620.1">
    <property type="nucleotide sequence ID" value="XM_002419575.1"/>
</dbReference>
<dbReference type="SMR" id="B9WEV3"/>
<dbReference type="GeneID" id="8046840"/>
<dbReference type="KEGG" id="cdu:CD36_87200"/>
<dbReference type="CGD" id="CAL0000166579">
    <property type="gene designation" value="Cd36_87200"/>
</dbReference>
<dbReference type="VEuPathDB" id="FungiDB:CD36_87200"/>
<dbReference type="eggNOG" id="ENOG502QVXN">
    <property type="taxonomic scope" value="Eukaryota"/>
</dbReference>
<dbReference type="HOGENOM" id="CLU_028817_0_0_1"/>
<dbReference type="OrthoDB" id="27140at2759"/>
<dbReference type="Proteomes" id="UP000002605">
    <property type="component" value="Chromosome 3"/>
</dbReference>
<dbReference type="GO" id="GO:0005737">
    <property type="term" value="C:cytoplasm"/>
    <property type="evidence" value="ECO:0007669"/>
    <property type="project" value="UniProtKB-SubCell"/>
</dbReference>
<dbReference type="Gene3D" id="1.10.472.80">
    <property type="entry name" value="Ypt/Rab-GAP domain of gyp1p, domain 3"/>
    <property type="match status" value="1"/>
</dbReference>
<dbReference type="InterPro" id="IPR000195">
    <property type="entry name" value="Rab-GAP-TBC_dom"/>
</dbReference>
<dbReference type="InterPro" id="IPR035969">
    <property type="entry name" value="Rab-GAP_TBC_sf"/>
</dbReference>
<dbReference type="SMART" id="SM00164">
    <property type="entry name" value="TBC"/>
    <property type="match status" value="1"/>
</dbReference>
<dbReference type="SUPFAM" id="SSF47923">
    <property type="entry name" value="Ypt/Rab-GAP domain of gyp1p"/>
    <property type="match status" value="1"/>
</dbReference>
<dbReference type="PROSITE" id="PS50086">
    <property type="entry name" value="TBC_RABGAP"/>
    <property type="match status" value="1"/>
</dbReference>
<evidence type="ECO:0000250" key="1"/>
<evidence type="ECO:0000255" key="2">
    <source>
        <dbReference type="PROSITE-ProRule" id="PRU00163"/>
    </source>
</evidence>
<evidence type="ECO:0000256" key="3">
    <source>
        <dbReference type="SAM" id="MobiDB-lite"/>
    </source>
</evidence>
<evidence type="ECO:0000305" key="4"/>
<sequence length="719" mass="82057">MFQSSKGSNSSSTSSSRSASISTATPNTVVEDEELLCDPKSELTPPAVTTPLRPVSKSNNTVEDDSKPSFTYDLDVFNLCKEYLNTRNHHGLALIARQKGIPPILRFKVWPILLKSHPFVISPFIQPDSELINESTSSRSNSSSSSTSTGSTTPISTSSGNIKDAAIIDGGASDNDNDGNNDNNDKDNNSNDTSSKEKEEDEQNNEIRQKIKRDLAKYIQRLKYSQSKYTVGETEHEILSILENAIMKFTLKWGKIIKYDSSLTWIALNLAEWFPPIPKTPWVLVGKEYSSSHQSLIVNFLDDYSNYIDNIPDLREYLERLIYHDERISTISFREVYERLVLVLLHCPQPMSRRKKSDNQGQSQRRNQSEAQKDQQSFKVNKTTLPKTGGTIEERVSYFIYCLRKLIPELSQYFHEEQILTKFGCLDDEWLIWWLKFCGTKVWSKYDRGRIWDFMLGWRLKNPKRDFNYYYEKLNYVNRNTLEKLGPDIFWSVGNEEDDISGDKNVDANANEINNSEKTSTGKLVKREGDIKRSSFKDLVNELSNELHISKRVSTDGVITSSSSSSSPTTTKLAPSSSTSSTITPNVSIPFSRVDPHVALIFISLSLLKSKENILVELDQHEIRQFLSRLPSKSYKYNQKRTTKPKRTSYTSNASSTSNSPMGQSPVDRDEDSIFPTNRIVISNDSKDQKHKVNFIDNIIQEAGELWRKWLWSEMVEDN</sequence>